<feature type="chain" id="PRO_0000205529" description="RNA polymerase sigma-54 factor">
    <location>
        <begin position="1"/>
        <end position="477"/>
    </location>
</feature>
<feature type="DNA-binding region" description="H-T-H motif" evidence="1">
    <location>
        <begin position="366"/>
        <end position="385"/>
    </location>
</feature>
<feature type="region of interest" description="Disordered" evidence="2">
    <location>
        <begin position="45"/>
        <end position="67"/>
    </location>
</feature>
<feature type="short sequence motif" description="RPON box">
    <location>
        <begin position="454"/>
        <end position="462"/>
    </location>
</feature>
<feature type="compositionally biased region" description="Basic and acidic residues" evidence="2">
    <location>
        <begin position="50"/>
        <end position="62"/>
    </location>
</feature>
<feature type="sequence conflict" description="In Ref. 1 and 2." evidence="3" ref="1 2">
    <original>GTSGD</original>
    <variation>APAVT</variation>
    <location>
        <begin position="99"/>
        <end position="103"/>
    </location>
</feature>
<feature type="helix" evidence="5">
    <location>
        <begin position="19"/>
        <end position="24"/>
    </location>
</feature>
<feature type="turn" evidence="5">
    <location>
        <begin position="25"/>
        <end position="27"/>
    </location>
</feature>
<feature type="helix" evidence="5">
    <location>
        <begin position="30"/>
        <end position="41"/>
    </location>
</feature>
<feature type="strand" evidence="6">
    <location>
        <begin position="47"/>
        <end position="49"/>
    </location>
</feature>
<feature type="helix" evidence="5">
    <location>
        <begin position="120"/>
        <end position="129"/>
    </location>
</feature>
<feature type="helix" evidence="5">
    <location>
        <begin position="135"/>
        <end position="146"/>
    </location>
</feature>
<feature type="strand" evidence="5">
    <location>
        <begin position="152"/>
        <end position="154"/>
    </location>
</feature>
<feature type="helix" evidence="5">
    <location>
        <begin position="158"/>
        <end position="165"/>
    </location>
</feature>
<feature type="helix" evidence="5">
    <location>
        <begin position="172"/>
        <end position="182"/>
    </location>
</feature>
<feature type="strand" evidence="5">
    <location>
        <begin position="185"/>
        <end position="187"/>
    </location>
</feature>
<feature type="turn" evidence="5">
    <location>
        <begin position="188"/>
        <end position="191"/>
    </location>
</feature>
<feature type="strand" evidence="5">
    <location>
        <begin position="192"/>
        <end position="194"/>
    </location>
</feature>
<feature type="helix" evidence="5">
    <location>
        <begin position="195"/>
        <end position="203"/>
    </location>
</feature>
<feature type="helix" evidence="5">
    <location>
        <begin position="213"/>
        <end position="222"/>
    </location>
</feature>
<feature type="helix" evidence="5">
    <location>
        <begin position="225"/>
        <end position="228"/>
    </location>
</feature>
<feature type="helix" evidence="5">
    <location>
        <begin position="234"/>
        <end position="239"/>
    </location>
</feature>
<feature type="helix" evidence="5">
    <location>
        <begin position="243"/>
        <end position="254"/>
    </location>
</feature>
<feature type="helix" evidence="5">
    <location>
        <begin position="260"/>
        <end position="262"/>
    </location>
</feature>
<feature type="strand" evidence="5">
    <location>
        <begin position="275"/>
        <end position="281"/>
    </location>
</feature>
<feature type="strand" evidence="5">
    <location>
        <begin position="284"/>
        <end position="289"/>
    </location>
</feature>
<feature type="turn" evidence="5">
    <location>
        <begin position="291"/>
        <end position="293"/>
    </location>
</feature>
<feature type="strand" evidence="6">
    <location>
        <begin position="297"/>
        <end position="299"/>
    </location>
</feature>
<feature type="helix" evidence="5">
    <location>
        <begin position="301"/>
        <end position="304"/>
    </location>
</feature>
<feature type="strand" evidence="6">
    <location>
        <begin position="307"/>
        <end position="311"/>
    </location>
</feature>
<feature type="helix" evidence="5">
    <location>
        <begin position="313"/>
        <end position="350"/>
    </location>
</feature>
<feature type="helix" evidence="5">
    <location>
        <begin position="353"/>
        <end position="357"/>
    </location>
</feature>
<feature type="helix" evidence="6">
    <location>
        <begin position="359"/>
        <end position="361"/>
    </location>
</feature>
<feature type="helix" evidence="5">
    <location>
        <begin position="367"/>
        <end position="373"/>
    </location>
</feature>
<feature type="helix" evidence="5">
    <location>
        <begin position="378"/>
        <end position="384"/>
    </location>
</feature>
<feature type="strand" evidence="5">
    <location>
        <begin position="390"/>
        <end position="392"/>
    </location>
</feature>
<feature type="strand" evidence="5">
    <location>
        <begin position="395"/>
        <end position="397"/>
    </location>
</feature>
<feature type="strand" evidence="6">
    <location>
        <begin position="406"/>
        <end position="408"/>
    </location>
</feature>
<feature type="strand" evidence="6">
    <location>
        <begin position="410"/>
        <end position="412"/>
    </location>
</feature>
<feature type="strand" evidence="6">
    <location>
        <begin position="414"/>
        <end position="416"/>
    </location>
</feature>
<feature type="helix" evidence="5">
    <location>
        <begin position="417"/>
        <end position="429"/>
    </location>
</feature>
<feature type="strand" evidence="5">
    <location>
        <begin position="433"/>
        <end position="435"/>
    </location>
</feature>
<feature type="helix" evidence="5">
    <location>
        <begin position="439"/>
        <end position="446"/>
    </location>
</feature>
<feature type="turn" evidence="4">
    <location>
        <begin position="448"/>
        <end position="450"/>
    </location>
</feature>
<feature type="helix" evidence="5">
    <location>
        <begin position="455"/>
        <end position="464"/>
    </location>
</feature>
<feature type="helix" evidence="5">
    <location>
        <begin position="470"/>
        <end position="472"/>
    </location>
</feature>
<keyword id="KW-0002">3D-structure</keyword>
<keyword id="KW-0056">Arginine metabolism</keyword>
<keyword id="KW-0238">DNA-binding</keyword>
<keyword id="KW-0240">DNA-directed RNA polymerase</keyword>
<keyword id="KW-0548">Nucleotidyltransferase</keyword>
<keyword id="KW-1185">Reference proteome</keyword>
<keyword id="KW-0731">Sigma factor</keyword>
<keyword id="KW-0804">Transcription</keyword>
<keyword id="KW-0805">Transcription regulation</keyword>
<keyword id="KW-0808">Transferase</keyword>
<dbReference type="EMBL" id="M57612">
    <property type="protein sequence ID" value="AAA62790.1"/>
    <property type="molecule type" value="Genomic_DNA"/>
</dbReference>
<dbReference type="EMBL" id="D12938">
    <property type="protein sequence ID" value="BAA02315.1"/>
    <property type="molecule type" value="Genomic_DNA"/>
</dbReference>
<dbReference type="EMBL" id="Z27094">
    <property type="protein sequence ID" value="CAA81617.1"/>
    <property type="molecule type" value="Genomic_DNA"/>
</dbReference>
<dbReference type="EMBL" id="U12684">
    <property type="protein sequence ID" value="AAB60163.1"/>
    <property type="molecule type" value="Genomic_DNA"/>
</dbReference>
<dbReference type="EMBL" id="U18997">
    <property type="protein sequence ID" value="AAA58004.1"/>
    <property type="molecule type" value="Genomic_DNA"/>
</dbReference>
<dbReference type="EMBL" id="U00096">
    <property type="protein sequence ID" value="AAC76234.1"/>
    <property type="molecule type" value="Genomic_DNA"/>
</dbReference>
<dbReference type="EMBL" id="AP009048">
    <property type="protein sequence ID" value="BAE77246.1"/>
    <property type="molecule type" value="Genomic_DNA"/>
</dbReference>
<dbReference type="PIR" id="I57054">
    <property type="entry name" value="A35695"/>
</dbReference>
<dbReference type="RefSeq" id="NP_417669.1">
    <property type="nucleotide sequence ID" value="NC_000913.3"/>
</dbReference>
<dbReference type="RefSeq" id="WP_000809057.1">
    <property type="nucleotide sequence ID" value="NZ_SSZK01000007.1"/>
</dbReference>
<dbReference type="PDB" id="2MT3">
    <property type="method" value="NMR"/>
    <property type="chains" value="A=414-477"/>
</dbReference>
<dbReference type="PDB" id="8F1I">
    <property type="method" value="EM"/>
    <property type="resolution" value="3.00 A"/>
    <property type="chains" value="M=1-477"/>
</dbReference>
<dbReference type="PDB" id="8F1J">
    <property type="method" value="EM"/>
    <property type="resolution" value="2.60 A"/>
    <property type="chains" value="M=1-477"/>
</dbReference>
<dbReference type="PDB" id="8F1K">
    <property type="method" value="EM"/>
    <property type="resolution" value="2.80 A"/>
    <property type="chains" value="M=1-477"/>
</dbReference>
<dbReference type="PDBsum" id="2MT3"/>
<dbReference type="PDBsum" id="8F1I"/>
<dbReference type="PDBsum" id="8F1J"/>
<dbReference type="PDBsum" id="8F1K"/>
<dbReference type="BMRB" id="P24255"/>
<dbReference type="EMDB" id="EMD-28783"/>
<dbReference type="EMDB" id="EMD-28792"/>
<dbReference type="SMR" id="P24255"/>
<dbReference type="BioGRID" id="4259282">
    <property type="interactions" value="43"/>
</dbReference>
<dbReference type="ComplexPortal" id="CPX-4884">
    <property type="entry name" value="DNA-directed RNA polymerase holoenzyme complex, Sigma54 variant"/>
</dbReference>
<dbReference type="DIP" id="DIP-10776N"/>
<dbReference type="FunCoup" id="P24255">
    <property type="interactions" value="371"/>
</dbReference>
<dbReference type="IntAct" id="P24255">
    <property type="interactions" value="14"/>
</dbReference>
<dbReference type="STRING" id="511145.b3202"/>
<dbReference type="jPOST" id="P24255"/>
<dbReference type="PaxDb" id="511145-b3202"/>
<dbReference type="EnsemblBacteria" id="AAC76234">
    <property type="protein sequence ID" value="AAC76234"/>
    <property type="gene ID" value="b3202"/>
</dbReference>
<dbReference type="GeneID" id="947714"/>
<dbReference type="KEGG" id="ecj:JW3169"/>
<dbReference type="KEGG" id="eco:b3202"/>
<dbReference type="KEGG" id="ecoc:C3026_17425"/>
<dbReference type="PATRIC" id="fig|1411691.4.peg.3529"/>
<dbReference type="EchoBASE" id="EB0891"/>
<dbReference type="eggNOG" id="COG1508">
    <property type="taxonomic scope" value="Bacteria"/>
</dbReference>
<dbReference type="HOGENOM" id="CLU_020569_0_1_6"/>
<dbReference type="InParanoid" id="P24255"/>
<dbReference type="OMA" id="VTTQKFM"/>
<dbReference type="OrthoDB" id="9814402at2"/>
<dbReference type="PhylomeDB" id="P24255"/>
<dbReference type="BioCyc" id="EcoCyc:RPON-MONOMER"/>
<dbReference type="BioCyc" id="MetaCyc:RPON-MONOMER"/>
<dbReference type="EvolutionaryTrace" id="P24255"/>
<dbReference type="PRO" id="PR:P24255"/>
<dbReference type="Proteomes" id="UP000000625">
    <property type="component" value="Chromosome"/>
</dbReference>
<dbReference type="CollecTF" id="EXPREG_00000990"/>
<dbReference type="GO" id="GO:0000345">
    <property type="term" value="C:cytosolic DNA-directed RNA polymerase complex"/>
    <property type="evidence" value="ECO:0000250"/>
    <property type="project" value="ComplexPortal"/>
</dbReference>
<dbReference type="GO" id="GO:0032993">
    <property type="term" value="C:protein-DNA complex"/>
    <property type="evidence" value="ECO:0000315"/>
    <property type="project" value="CollecTF"/>
</dbReference>
<dbReference type="GO" id="GO:0001216">
    <property type="term" value="F:DNA-binding transcription activator activity"/>
    <property type="evidence" value="ECO:0000315"/>
    <property type="project" value="CollecTF"/>
</dbReference>
<dbReference type="GO" id="GO:0016779">
    <property type="term" value="F:nucleotidyltransferase activity"/>
    <property type="evidence" value="ECO:0007669"/>
    <property type="project" value="UniProtKB-KW"/>
</dbReference>
<dbReference type="GO" id="GO:0016987">
    <property type="term" value="F:sigma factor activity"/>
    <property type="evidence" value="ECO:0007669"/>
    <property type="project" value="UniProtKB-KW"/>
</dbReference>
<dbReference type="GO" id="GO:0000976">
    <property type="term" value="F:transcription cis-regulatory region binding"/>
    <property type="evidence" value="ECO:0000315"/>
    <property type="project" value="CollecTF"/>
</dbReference>
<dbReference type="GO" id="GO:0006525">
    <property type="term" value="P:arginine metabolic process"/>
    <property type="evidence" value="ECO:0007669"/>
    <property type="project" value="UniProtKB-KW"/>
</dbReference>
<dbReference type="GO" id="GO:0048870">
    <property type="term" value="P:cell motility"/>
    <property type="evidence" value="ECO:0000303"/>
    <property type="project" value="ComplexPortal"/>
</dbReference>
<dbReference type="GO" id="GO:0006352">
    <property type="term" value="P:DNA-templated transcription initiation"/>
    <property type="evidence" value="ECO:0000250"/>
    <property type="project" value="ComplexPortal"/>
</dbReference>
<dbReference type="GO" id="GO:0042128">
    <property type="term" value="P:nitrate assimilation"/>
    <property type="evidence" value="ECO:0000303"/>
    <property type="project" value="ComplexPortal"/>
</dbReference>
<dbReference type="GO" id="GO:0045893">
    <property type="term" value="P:positive regulation of DNA-templated transcription"/>
    <property type="evidence" value="ECO:0000314"/>
    <property type="project" value="EcoCyc"/>
</dbReference>
<dbReference type="GO" id="GO:0006355">
    <property type="term" value="P:regulation of DNA-templated transcription"/>
    <property type="evidence" value="ECO:0000318"/>
    <property type="project" value="GO_Central"/>
</dbReference>
<dbReference type="GO" id="GO:2000142">
    <property type="term" value="P:regulation of DNA-templated transcription initiation"/>
    <property type="evidence" value="ECO:0000250"/>
    <property type="project" value="ComplexPortal"/>
</dbReference>
<dbReference type="GO" id="GO:0090605">
    <property type="term" value="P:submerged biofilm formation"/>
    <property type="evidence" value="ECO:0000303"/>
    <property type="project" value="ComplexPortal"/>
</dbReference>
<dbReference type="DisProt" id="DP01169"/>
<dbReference type="FunFam" id="1.10.10.1330:FF:000001">
    <property type="entry name" value="RNA polymerase sigma-54 factor"/>
    <property type="match status" value="1"/>
</dbReference>
<dbReference type="FunFam" id="1.10.10.60:FF:000045">
    <property type="entry name" value="RNA polymerase sigma-54 factor"/>
    <property type="match status" value="1"/>
</dbReference>
<dbReference type="Gene3D" id="1.10.10.60">
    <property type="entry name" value="Homeodomain-like"/>
    <property type="match status" value="1"/>
</dbReference>
<dbReference type="Gene3D" id="1.10.10.1330">
    <property type="entry name" value="RNA polymerase sigma-54 factor, core-binding domain"/>
    <property type="match status" value="1"/>
</dbReference>
<dbReference type="InterPro" id="IPR000394">
    <property type="entry name" value="RNA_pol_sigma_54"/>
</dbReference>
<dbReference type="InterPro" id="IPR007046">
    <property type="entry name" value="RNA_pol_sigma_54_core-bd"/>
</dbReference>
<dbReference type="InterPro" id="IPR007634">
    <property type="entry name" value="RNA_pol_sigma_54_DNA-bd"/>
</dbReference>
<dbReference type="InterPro" id="IPR038709">
    <property type="entry name" value="RpoN_core-bd_sf"/>
</dbReference>
<dbReference type="NCBIfam" id="NF004595">
    <property type="entry name" value="PRK05932.1-2"/>
    <property type="match status" value="1"/>
</dbReference>
<dbReference type="NCBIfam" id="NF004597">
    <property type="entry name" value="PRK05932.1-4"/>
    <property type="match status" value="1"/>
</dbReference>
<dbReference type="NCBIfam" id="NF009118">
    <property type="entry name" value="PRK12469.1"/>
    <property type="match status" value="1"/>
</dbReference>
<dbReference type="NCBIfam" id="TIGR02395">
    <property type="entry name" value="rpoN_sigma"/>
    <property type="match status" value="1"/>
</dbReference>
<dbReference type="PANTHER" id="PTHR32248">
    <property type="entry name" value="RNA POLYMERASE SIGMA-54 FACTOR"/>
    <property type="match status" value="1"/>
</dbReference>
<dbReference type="PANTHER" id="PTHR32248:SF4">
    <property type="entry name" value="RNA POLYMERASE SIGMA-54 FACTOR"/>
    <property type="match status" value="1"/>
</dbReference>
<dbReference type="Pfam" id="PF00309">
    <property type="entry name" value="Sigma54_AID"/>
    <property type="match status" value="1"/>
</dbReference>
<dbReference type="Pfam" id="PF04963">
    <property type="entry name" value="Sigma54_CBD"/>
    <property type="match status" value="1"/>
</dbReference>
<dbReference type="Pfam" id="PF04552">
    <property type="entry name" value="Sigma54_DBD"/>
    <property type="match status" value="1"/>
</dbReference>
<dbReference type="PIRSF" id="PIRSF000774">
    <property type="entry name" value="RpoN"/>
    <property type="match status" value="1"/>
</dbReference>
<dbReference type="PRINTS" id="PR00045">
    <property type="entry name" value="SIGMA54FCT"/>
</dbReference>
<dbReference type="PROSITE" id="PS00717">
    <property type="entry name" value="SIGMA54_1"/>
    <property type="match status" value="1"/>
</dbReference>
<dbReference type="PROSITE" id="PS00718">
    <property type="entry name" value="SIGMA54_2"/>
    <property type="match status" value="1"/>
</dbReference>
<dbReference type="PROSITE" id="PS50044">
    <property type="entry name" value="SIGMA54_3"/>
    <property type="match status" value="1"/>
</dbReference>
<reference key="1">
    <citation type="journal article" date="1990" name="Cell">
        <title>Role of eukaryotic-type functional domains found in the prokaryotic enhancer receptor factor sigma 54.</title>
        <authorList>
            <person name="Sasse-Dwight S."/>
            <person name="Gralla J.D."/>
        </authorList>
    </citation>
    <scope>NUCLEOTIDE SEQUENCE [GENOMIC DNA]</scope>
</reference>
<reference key="2">
    <citation type="journal article" date="1993" name="J. Bacteriol.">
        <title>Physical map location of the rpoN gene of Escherichia coli.</title>
        <authorList>
            <person name="Imaishi H."/>
            <person name="Gomada M."/>
            <person name="Inouye S."/>
            <person name="Nakazawa A."/>
        </authorList>
    </citation>
    <scope>NUCLEOTIDE SEQUENCE [GENOMIC DNA]</scope>
    <source>
        <strain>K12</strain>
    </source>
</reference>
<reference key="3">
    <citation type="journal article" date="1994" name="Microbiology">
        <title>Molecular analysis of the operon which encodes the RNA polymerase sigma factor sigma 54 of Escherichia coli.</title>
        <authorList>
            <person name="Jones D.H.A."/>
            <person name="Franklin C.F.H."/>
            <person name="Thomas C.M."/>
        </authorList>
    </citation>
    <scope>NUCLEOTIDE SEQUENCE [GENOMIC DNA]</scope>
    <source>
        <strain>K12</strain>
    </source>
</reference>
<reference key="4">
    <citation type="journal article" date="1995" name="J. Biol. Chem.">
        <title>Novel proteins of the phosphotransferase system encoded within the rpoN operon of Escherichia coli. Enzyme IIANtr affects growth on organic nitrogen and the conditional lethality of an erats mutant.</title>
        <authorList>
            <person name="Powell B.S."/>
            <person name="Court D.L."/>
            <person name="Inada T."/>
            <person name="Nakamura Y."/>
            <person name="Michotey V."/>
            <person name="Cui X."/>
            <person name="Reizer A."/>
            <person name="Saier M.H. Jr."/>
            <person name="Reizer J."/>
        </authorList>
    </citation>
    <scope>NUCLEOTIDE SEQUENCE [GENOMIC DNA]</scope>
    <source>
        <strain>K12 / W3110 / ATCC 27325 / DSM 5911</strain>
    </source>
</reference>
<reference key="5">
    <citation type="journal article" date="1997" name="Science">
        <title>The complete genome sequence of Escherichia coli K-12.</title>
        <authorList>
            <person name="Blattner F.R."/>
            <person name="Plunkett G. III"/>
            <person name="Bloch C.A."/>
            <person name="Perna N.T."/>
            <person name="Burland V."/>
            <person name="Riley M."/>
            <person name="Collado-Vides J."/>
            <person name="Glasner J.D."/>
            <person name="Rode C.K."/>
            <person name="Mayhew G.F."/>
            <person name="Gregor J."/>
            <person name="Davis N.W."/>
            <person name="Kirkpatrick H.A."/>
            <person name="Goeden M.A."/>
            <person name="Rose D.J."/>
            <person name="Mau B."/>
            <person name="Shao Y."/>
        </authorList>
    </citation>
    <scope>NUCLEOTIDE SEQUENCE [LARGE SCALE GENOMIC DNA]</scope>
    <source>
        <strain>K12 / MG1655 / ATCC 47076</strain>
    </source>
</reference>
<reference key="6">
    <citation type="journal article" date="2006" name="Mol. Syst. Biol.">
        <title>Highly accurate genome sequences of Escherichia coli K-12 strains MG1655 and W3110.</title>
        <authorList>
            <person name="Hayashi K."/>
            <person name="Morooka N."/>
            <person name="Yamamoto Y."/>
            <person name="Fujita K."/>
            <person name="Isono K."/>
            <person name="Choi S."/>
            <person name="Ohtsubo E."/>
            <person name="Baba T."/>
            <person name="Wanner B.L."/>
            <person name="Mori H."/>
            <person name="Horiuchi T."/>
        </authorList>
    </citation>
    <scope>NUCLEOTIDE SEQUENCE [LARGE SCALE GENOMIC DNA]</scope>
    <source>
        <strain>K12 / W3110 / ATCC 27325 / DSM 5911</strain>
    </source>
</reference>
<organism>
    <name type="scientific">Escherichia coli (strain K12)</name>
    <dbReference type="NCBI Taxonomy" id="83333"/>
    <lineage>
        <taxon>Bacteria</taxon>
        <taxon>Pseudomonadati</taxon>
        <taxon>Pseudomonadota</taxon>
        <taxon>Gammaproteobacteria</taxon>
        <taxon>Enterobacterales</taxon>
        <taxon>Enterobacteriaceae</taxon>
        <taxon>Escherichia</taxon>
    </lineage>
</organism>
<gene>
    <name type="primary">rpoN</name>
    <name type="synonym">glnF</name>
    <name type="synonym">ntrA</name>
    <name type="ordered locus">b3202</name>
    <name type="ordered locus">JW3169</name>
</gene>
<sequence length="477" mass="53990">MKQGLQLRLSQQLAMTPQLQQAIRLLQLSTLELQQELQQALESNPLLEQIDTHEEIDTRETQDSETLDTADALEQKEMPEELPLDASWDTIYTAGTPSGTSGDYIDDELPVYQGETTQTLQDYLMWQVELTPFSDTDRAIATSIVDAVDETGYLTVPLEDILESIGDEEIDIDEVEAVLKRIQRFDPVGVAAKDLRDCLLIQLSQFDKTTPWLEEARLIISDHLDLLANHDFRTLMRVTRLKEDVLKEAVNLIQSLDPRPGQSIQTGEPEYVIPDVLVRKHNGHWTVELNSDSIPRLQINQHYASMCNNARNDGDSQFIRSNLQDAKWLIKSLESRNDTLLRVSRCIVEQQQAFFEQGEEYMKPMVLADIAQAVEMHESTISRVTTQKYLHSPRGIFELKYFFSSHVNTEGGGEASSTAIRALVKKLIAAENPAKPLSDSKLTSLLSEQGIMVARRTVAKYRESLSIPPSNQRKQLV</sequence>
<name>RP54_ECOLI</name>
<proteinExistence type="evidence at protein level"/>
<accession>P24255</accession>
<accession>Q2M910</accession>
<evidence type="ECO:0000250" key="1"/>
<evidence type="ECO:0000256" key="2">
    <source>
        <dbReference type="SAM" id="MobiDB-lite"/>
    </source>
</evidence>
<evidence type="ECO:0000305" key="3"/>
<evidence type="ECO:0007829" key="4">
    <source>
        <dbReference type="PDB" id="2MT3"/>
    </source>
</evidence>
<evidence type="ECO:0007829" key="5">
    <source>
        <dbReference type="PDB" id="8F1J"/>
    </source>
</evidence>
<evidence type="ECO:0007829" key="6">
    <source>
        <dbReference type="PDB" id="8F1K"/>
    </source>
</evidence>
<protein>
    <recommendedName>
        <fullName>RNA polymerase sigma-54 factor</fullName>
    </recommendedName>
</protein>
<comment type="function">
    <text>Sigma factors are initiation factors that promote the attachment of RNA polymerase to specific initiation sites and are then released. This sigma factor is responsible for the expression of enzymes involved in arginine catabolism. The open complex (sigma-54 and core RNA polymerase) serves as the receptor for the receipt of the melting signal from the remotely bound activator protein GlnG(NtrC).</text>
</comment>
<comment type="similarity">
    <text evidence="3">Belongs to the sigma-54 factor family.</text>
</comment>